<sequence length="220" mass="24938">MDSNTVSSFQVDCFLWHVRKQVVDQELGDAPFLDRLRRDQKSLRGRGSTLGLNIEAATRVGKQIVERILKEESDEALKMTMASAPASRYLTDMTIEELSRDWFMLMPKQKVEGPLCIRIDQAIMDKNIMLKANFSVIFDRLETLILLRAFTEEGAIVGEISPLPSLPGHTIEDVKNAIGVLIGGLEWNDNTVRVSKTLQRFAWRSSNENGRHPLTPKQKQ</sequence>
<organismHost>
    <name type="scientific">Aves</name>
    <dbReference type="NCBI Taxonomy" id="8782"/>
</organismHost>
<organismHost>
    <name type="scientific">Homo sapiens</name>
    <name type="common">Human</name>
    <dbReference type="NCBI Taxonomy" id="9606"/>
</organismHost>
<protein>
    <recommendedName>
        <fullName evidence="1">Non-structural protein 1</fullName>
        <shortName evidence="1">NS1</shortName>
    </recommendedName>
    <alternativeName>
        <fullName evidence="1">NS1A</fullName>
    </alternativeName>
</protein>
<name>NS1_I67A0</name>
<comment type="function">
    <text evidence="1">Inhibits post-transcriptional processing of cellular pre-mRNA, by binding and inhibiting two cellular proteins that are required for the 3'-end processing of cellular pre-mRNAs: the 30 kDa cleavage and polyadenylation specificity factor/CPSF4 and the poly(A)-binding protein 2/PABPN1. In turn, unprocessed 3' end pre-mRNAs accumulate in the host nucleus and are no longer exported to the cytoplasm. Cellular protein synthesis is thereby shut off very early after virus infection. Viral protein synthesis is not affected by the inhibition of the cellular 3' end processing machinery because the poly(A) tails of viral mRNAs are produced by the viral polymerase through a stuttering mechanism. Prevents the establishment of the cellular antiviral state by inhibiting TRIM25-mediated RIGI ubiquitination, which normally triggers the antiviral transduction signal that leads to the activation of type I IFN genes by transcription factors IRF3 and IRF7. Also binds poly(A) and U6 snRNA. Inhibits the integrated stress response (ISR) in the infected cell by blocking dsRNA binding by EIF2AK2/PKR and further phosphorylation of EIF2S1/EIF-2ALPHA. Stress granule formation is thus inhibited, which allows protein synthesis and viral replication.</text>
</comment>
<comment type="subunit">
    <text evidence="1">Homodimer. Interacts with host TRIM25 (via coiled coil); this interaction specifically inhibits TRIM25 multimerization and TRIM25-mediated RIGI CARD ubiquitination. Interacts with human EIF2AK2/PKR, CPSF4, IVNS1ABP and PABPN1.</text>
</comment>
<comment type="subcellular location">
    <subcellularLocation>
        <location evidence="1">Host nucleus</location>
    </subcellularLocation>
    <subcellularLocation>
        <location evidence="1">Host cytoplasm</location>
    </subcellularLocation>
    <text evidence="1">In uninfected, transfected cells, NS1 is localized in the nucleus. Only in virus infected cells, the nuclear export signal is unveiled, presumably by a viral protein, and a fraction of NS1 is exported in the cytoplasm.</text>
</comment>
<comment type="alternative products">
    <event type="alternative splicing"/>
    <isoform>
        <id>Q6XTD8-1</id>
        <name>NS1</name>
        <sequence type="displayed"/>
    </isoform>
    <isoform>
        <id>Q6XTD9-1</id>
        <name>NEP</name>
        <name>NS2</name>
        <sequence type="external"/>
    </isoform>
</comment>
<comment type="domain">
    <text evidence="1">The dsRNA-binding region is required for suppression of RNA silencing.</text>
</comment>
<comment type="PTM">
    <text evidence="1">Upon interferon induction, ISGylated via host HERC5; this results in the impairment of NS1 interaction with RNA targets due to its inability to form homodimers and to interact with host EIF2AK2/PKR.</text>
</comment>
<comment type="similarity">
    <text evidence="1">Belongs to the influenza A viruses NS1 family.</text>
</comment>
<proteinExistence type="inferred from homology"/>
<dbReference type="EMBL" id="AY210183">
    <property type="protein sequence ID" value="AAO46631.1"/>
    <property type="molecule type" value="Genomic_RNA"/>
</dbReference>
<dbReference type="SMR" id="Q6XTD8"/>
<dbReference type="GO" id="GO:0030430">
    <property type="term" value="C:host cell cytoplasm"/>
    <property type="evidence" value="ECO:0007669"/>
    <property type="project" value="UniProtKB-SubCell"/>
</dbReference>
<dbReference type="GO" id="GO:0042025">
    <property type="term" value="C:host cell nucleus"/>
    <property type="evidence" value="ECO:0007669"/>
    <property type="project" value="UniProtKB-SubCell"/>
</dbReference>
<dbReference type="GO" id="GO:0030291">
    <property type="term" value="F:protein serine/threonine kinase inhibitor activity"/>
    <property type="evidence" value="ECO:0007669"/>
    <property type="project" value="UniProtKB-KW"/>
</dbReference>
<dbReference type="GO" id="GO:0003723">
    <property type="term" value="F:RNA binding"/>
    <property type="evidence" value="ECO:0007669"/>
    <property type="project" value="UniProtKB-KW"/>
</dbReference>
<dbReference type="GO" id="GO:0039540">
    <property type="term" value="P:symbiont-mediated suppression of host cytoplasmic pattern recognition receptor signaling pathway via inhibition of RIG-I activity"/>
    <property type="evidence" value="ECO:0007669"/>
    <property type="project" value="UniProtKB-KW"/>
</dbReference>
<dbReference type="GO" id="GO:0039657">
    <property type="term" value="P:symbiont-mediated suppression of host gene expression"/>
    <property type="evidence" value="ECO:0007669"/>
    <property type="project" value="UniProtKB-KW"/>
</dbReference>
<dbReference type="GO" id="GO:0039524">
    <property type="term" value="P:symbiont-mediated suppression of host mRNA processing"/>
    <property type="evidence" value="ECO:0007669"/>
    <property type="project" value="UniProtKB-KW"/>
</dbReference>
<dbReference type="GO" id="GO:0039580">
    <property type="term" value="P:symbiont-mediated suppression of host PKR/eIFalpha signaling"/>
    <property type="evidence" value="ECO:0007669"/>
    <property type="project" value="UniProtKB-KW"/>
</dbReference>
<dbReference type="GO" id="GO:0039502">
    <property type="term" value="P:symbiont-mediated suppression of host type I interferon-mediated signaling pathway"/>
    <property type="evidence" value="ECO:0007669"/>
    <property type="project" value="UniProtKB-KW"/>
</dbReference>
<dbReference type="FunFam" id="1.10.287.10:FF:000001">
    <property type="entry name" value="Non-structural protein 1"/>
    <property type="match status" value="1"/>
</dbReference>
<dbReference type="FunFam" id="3.30.420.330:FF:000001">
    <property type="entry name" value="Non-structural protein 1"/>
    <property type="match status" value="1"/>
</dbReference>
<dbReference type="Gene3D" id="3.30.420.330">
    <property type="entry name" value="Influenza virus non-structural protein, effector domain"/>
    <property type="match status" value="1"/>
</dbReference>
<dbReference type="Gene3D" id="1.10.287.10">
    <property type="entry name" value="S15/NS1, RNA-binding"/>
    <property type="match status" value="1"/>
</dbReference>
<dbReference type="HAMAP" id="MF_04066">
    <property type="entry name" value="INFV_NS1"/>
    <property type="match status" value="1"/>
</dbReference>
<dbReference type="InterPro" id="IPR004208">
    <property type="entry name" value="NS1"/>
</dbReference>
<dbReference type="InterPro" id="IPR000256">
    <property type="entry name" value="NS1A"/>
</dbReference>
<dbReference type="InterPro" id="IPR038064">
    <property type="entry name" value="NS1A_effect_dom-like_sf"/>
</dbReference>
<dbReference type="InterPro" id="IPR009068">
    <property type="entry name" value="uS15_NS1_RNA-bd_sf"/>
</dbReference>
<dbReference type="Pfam" id="PF00600">
    <property type="entry name" value="Flu_NS1"/>
    <property type="match status" value="1"/>
</dbReference>
<dbReference type="SUPFAM" id="SSF143021">
    <property type="entry name" value="Ns1 effector domain-like"/>
    <property type="match status" value="1"/>
</dbReference>
<dbReference type="SUPFAM" id="SSF47060">
    <property type="entry name" value="S15/NS1 RNA-binding domain"/>
    <property type="match status" value="1"/>
</dbReference>
<feature type="chain" id="PRO_0000324244" description="Non-structural protein 1">
    <location>
        <begin position="1"/>
        <end position="220"/>
    </location>
</feature>
<feature type="region of interest" description="RNA-binding and homodimerization" evidence="1">
    <location>
        <begin position="1"/>
        <end position="73"/>
    </location>
</feature>
<feature type="region of interest" description="CPSF4-binding" evidence="1">
    <location>
        <begin position="180"/>
        <end position="215"/>
    </location>
</feature>
<feature type="short sequence motif" description="Nuclear localization signal" evidence="1">
    <location>
        <begin position="34"/>
        <end position="38"/>
    </location>
</feature>
<feature type="short sequence motif" description="Nuclear export signal" evidence="1">
    <location>
        <begin position="137"/>
        <end position="146"/>
    </location>
</feature>
<reference key="1">
    <citation type="journal article" date="2004" name="Virology">
        <title>Genetic analysis of human H2N2 and early H3N2 influenza viruses, 1957-1972: evidence for genetic divergence and multiple reassortment events.</title>
        <authorList>
            <person name="Lindstrom S.E."/>
            <person name="Cox N.J."/>
            <person name="Klimov A."/>
        </authorList>
    </citation>
    <scope>NUCLEOTIDE SEQUENCE [GENOMIC RNA]</scope>
</reference>
<evidence type="ECO:0000255" key="1">
    <source>
        <dbReference type="HAMAP-Rule" id="MF_04066"/>
    </source>
</evidence>
<accession>Q6XTD8</accession>
<gene>
    <name evidence="1" type="primary">NS</name>
</gene>
<organism>
    <name type="scientific">Influenza A virus (strain A/Tokyo/3/1967 H2N2)</name>
    <dbReference type="NCBI Taxonomy" id="380960"/>
    <lineage>
        <taxon>Viruses</taxon>
        <taxon>Riboviria</taxon>
        <taxon>Orthornavirae</taxon>
        <taxon>Negarnaviricota</taxon>
        <taxon>Polyploviricotina</taxon>
        <taxon>Insthoviricetes</taxon>
        <taxon>Articulavirales</taxon>
        <taxon>Orthomyxoviridae</taxon>
        <taxon>Alphainfluenzavirus</taxon>
        <taxon>Alphainfluenzavirus influenzae</taxon>
        <taxon>Influenza A virus</taxon>
    </lineage>
</organism>
<keyword id="KW-0025">Alternative splicing</keyword>
<keyword id="KW-1262">Eukaryotic host gene expression shutoff by virus</keyword>
<keyword id="KW-1035">Host cytoplasm</keyword>
<keyword id="KW-1190">Host gene expression shutoff by virus</keyword>
<keyword id="KW-1192">Host mRNA suppression by virus</keyword>
<keyword id="KW-1048">Host nucleus</keyword>
<keyword id="KW-0945">Host-virus interaction</keyword>
<keyword id="KW-1090">Inhibition of host innate immune response by virus</keyword>
<keyword id="KW-1114">Inhibition of host interferon signaling pathway by virus</keyword>
<keyword id="KW-1102">Inhibition of host PKR by virus</keyword>
<keyword id="KW-1103">Inhibition of host pre-mRNA processing by virus</keyword>
<keyword id="KW-1088">Inhibition of host RIG-I by virus</keyword>
<keyword id="KW-1113">Inhibition of host RLR pathway by virus</keyword>
<keyword id="KW-0922">Interferon antiviral system evasion</keyword>
<keyword id="KW-0694">RNA-binding</keyword>
<keyword id="KW-0832">Ubl conjugation</keyword>
<keyword id="KW-0899">Viral immunoevasion</keyword>